<protein>
    <recommendedName>
        <fullName evidence="1">tRNA-specific 2-thiouridylase MnmA</fullName>
        <ecNumber evidence="1">2.8.1.13</ecNumber>
    </recommendedName>
</protein>
<name>MNMA_ALIF1</name>
<keyword id="KW-0067">ATP-binding</keyword>
<keyword id="KW-0963">Cytoplasm</keyword>
<keyword id="KW-1015">Disulfide bond</keyword>
<keyword id="KW-0547">Nucleotide-binding</keyword>
<keyword id="KW-1185">Reference proteome</keyword>
<keyword id="KW-0694">RNA-binding</keyword>
<keyword id="KW-0808">Transferase</keyword>
<keyword id="KW-0819">tRNA processing</keyword>
<keyword id="KW-0820">tRNA-binding</keyword>
<dbReference type="EC" id="2.8.1.13" evidence="1"/>
<dbReference type="EMBL" id="CP000020">
    <property type="protein sequence ID" value="AAW86279.1"/>
    <property type="molecule type" value="Genomic_DNA"/>
</dbReference>
<dbReference type="RefSeq" id="WP_011262316.1">
    <property type="nucleotide sequence ID" value="NC_006840.2"/>
</dbReference>
<dbReference type="RefSeq" id="YP_205167.1">
    <property type="nucleotide sequence ID" value="NC_006840.2"/>
</dbReference>
<dbReference type="SMR" id="Q5E3W7"/>
<dbReference type="STRING" id="312309.VF_1784"/>
<dbReference type="EnsemblBacteria" id="AAW86279">
    <property type="protein sequence ID" value="AAW86279"/>
    <property type="gene ID" value="VF_1784"/>
</dbReference>
<dbReference type="GeneID" id="54164484"/>
<dbReference type="KEGG" id="vfi:VF_1784"/>
<dbReference type="PATRIC" id="fig|312309.11.peg.1810"/>
<dbReference type="eggNOG" id="COG0482">
    <property type="taxonomic scope" value="Bacteria"/>
</dbReference>
<dbReference type="HOGENOM" id="CLU_035188_1_0_6"/>
<dbReference type="OrthoDB" id="9800696at2"/>
<dbReference type="Proteomes" id="UP000000537">
    <property type="component" value="Chromosome I"/>
</dbReference>
<dbReference type="GO" id="GO:0005737">
    <property type="term" value="C:cytoplasm"/>
    <property type="evidence" value="ECO:0007669"/>
    <property type="project" value="UniProtKB-SubCell"/>
</dbReference>
<dbReference type="GO" id="GO:0005524">
    <property type="term" value="F:ATP binding"/>
    <property type="evidence" value="ECO:0007669"/>
    <property type="project" value="UniProtKB-KW"/>
</dbReference>
<dbReference type="GO" id="GO:0000049">
    <property type="term" value="F:tRNA binding"/>
    <property type="evidence" value="ECO:0007669"/>
    <property type="project" value="UniProtKB-KW"/>
</dbReference>
<dbReference type="GO" id="GO:0103016">
    <property type="term" value="F:tRNA-uridine 2-sulfurtransferase activity"/>
    <property type="evidence" value="ECO:0007669"/>
    <property type="project" value="UniProtKB-EC"/>
</dbReference>
<dbReference type="GO" id="GO:0002143">
    <property type="term" value="P:tRNA wobble position uridine thiolation"/>
    <property type="evidence" value="ECO:0007669"/>
    <property type="project" value="TreeGrafter"/>
</dbReference>
<dbReference type="CDD" id="cd01998">
    <property type="entry name" value="MnmA_TRMU-like"/>
    <property type="match status" value="1"/>
</dbReference>
<dbReference type="FunFam" id="2.30.30.280:FF:000001">
    <property type="entry name" value="tRNA-specific 2-thiouridylase MnmA"/>
    <property type="match status" value="1"/>
</dbReference>
<dbReference type="FunFam" id="2.40.30.10:FF:000023">
    <property type="entry name" value="tRNA-specific 2-thiouridylase MnmA"/>
    <property type="match status" value="1"/>
</dbReference>
<dbReference type="FunFam" id="3.40.50.620:FF:000004">
    <property type="entry name" value="tRNA-specific 2-thiouridylase MnmA"/>
    <property type="match status" value="1"/>
</dbReference>
<dbReference type="Gene3D" id="2.30.30.280">
    <property type="entry name" value="Adenine nucleotide alpha hydrolases-like domains"/>
    <property type="match status" value="1"/>
</dbReference>
<dbReference type="Gene3D" id="3.40.50.620">
    <property type="entry name" value="HUPs"/>
    <property type="match status" value="1"/>
</dbReference>
<dbReference type="Gene3D" id="2.40.30.10">
    <property type="entry name" value="Translation factors"/>
    <property type="match status" value="1"/>
</dbReference>
<dbReference type="HAMAP" id="MF_00144">
    <property type="entry name" value="tRNA_thiouridyl_MnmA"/>
    <property type="match status" value="1"/>
</dbReference>
<dbReference type="InterPro" id="IPR004506">
    <property type="entry name" value="MnmA-like"/>
</dbReference>
<dbReference type="InterPro" id="IPR046885">
    <property type="entry name" value="MnmA-like_C"/>
</dbReference>
<dbReference type="InterPro" id="IPR046884">
    <property type="entry name" value="MnmA-like_central"/>
</dbReference>
<dbReference type="InterPro" id="IPR023382">
    <property type="entry name" value="MnmA-like_central_sf"/>
</dbReference>
<dbReference type="InterPro" id="IPR014729">
    <property type="entry name" value="Rossmann-like_a/b/a_fold"/>
</dbReference>
<dbReference type="NCBIfam" id="NF001138">
    <property type="entry name" value="PRK00143.1"/>
    <property type="match status" value="1"/>
</dbReference>
<dbReference type="NCBIfam" id="TIGR00420">
    <property type="entry name" value="trmU"/>
    <property type="match status" value="1"/>
</dbReference>
<dbReference type="PANTHER" id="PTHR11933:SF5">
    <property type="entry name" value="MITOCHONDRIAL TRNA-SPECIFIC 2-THIOURIDYLASE 1"/>
    <property type="match status" value="1"/>
</dbReference>
<dbReference type="PANTHER" id="PTHR11933">
    <property type="entry name" value="TRNA 5-METHYLAMINOMETHYL-2-THIOURIDYLATE -METHYLTRANSFERASE"/>
    <property type="match status" value="1"/>
</dbReference>
<dbReference type="Pfam" id="PF03054">
    <property type="entry name" value="tRNA_Me_trans"/>
    <property type="match status" value="1"/>
</dbReference>
<dbReference type="Pfam" id="PF20258">
    <property type="entry name" value="tRNA_Me_trans_C"/>
    <property type="match status" value="1"/>
</dbReference>
<dbReference type="Pfam" id="PF20259">
    <property type="entry name" value="tRNA_Me_trans_M"/>
    <property type="match status" value="1"/>
</dbReference>
<dbReference type="SUPFAM" id="SSF52402">
    <property type="entry name" value="Adenine nucleotide alpha hydrolases-like"/>
    <property type="match status" value="1"/>
</dbReference>
<accession>Q5E3W7</accession>
<sequence length="374" mass="41804">MSDNSQKKVIVGMSGGVDSSVSAYLLQQQGYQVEGLFMKNWEEDDNEEYCTAAEDLADAQAVCDKLGIHLHTINFAAEYWDNVFEYFLEEYKAGRTPNPDILCNKEIKFKAFLEFADEVLDADFIAMGHYVRRTFPTAEEIANGIKPQMLRGLDSNKDQSYFLYTLSSEQVARSLFPVGELEKPEVRRIAEEQGLITAKKKDSTGICFIGERKFTEFLGKYLPAQPGNIETPEGKVIGQHQGLMYHTLGQRKGLHIGGTKGGGGNEDPWFVGEKDLKRNVLIAVQGKDHPLLKSQGLLASQLHWVDRTPIKAPLSCTVKTRYRQTDIPCTIIPVDDENIKVIFDEPQIAVTPGQSAVFYLDEVCLGGGIIEERI</sequence>
<evidence type="ECO:0000255" key="1">
    <source>
        <dbReference type="HAMAP-Rule" id="MF_00144"/>
    </source>
</evidence>
<proteinExistence type="inferred from homology"/>
<organism>
    <name type="scientific">Aliivibrio fischeri (strain ATCC 700601 / ES114)</name>
    <name type="common">Vibrio fischeri</name>
    <dbReference type="NCBI Taxonomy" id="312309"/>
    <lineage>
        <taxon>Bacteria</taxon>
        <taxon>Pseudomonadati</taxon>
        <taxon>Pseudomonadota</taxon>
        <taxon>Gammaproteobacteria</taxon>
        <taxon>Vibrionales</taxon>
        <taxon>Vibrionaceae</taxon>
        <taxon>Aliivibrio</taxon>
    </lineage>
</organism>
<feature type="chain" id="PRO_0000121698" description="tRNA-specific 2-thiouridylase MnmA">
    <location>
        <begin position="1"/>
        <end position="374"/>
    </location>
</feature>
<feature type="region of interest" description="Interaction with target base in tRNA" evidence="1">
    <location>
        <begin position="98"/>
        <end position="100"/>
    </location>
</feature>
<feature type="region of interest" description="Interaction with tRNA" evidence="1">
    <location>
        <begin position="157"/>
        <end position="159"/>
    </location>
</feature>
<feature type="region of interest" description="Interaction with tRNA" evidence="1">
    <location>
        <begin position="321"/>
        <end position="322"/>
    </location>
</feature>
<feature type="active site" description="Nucleophile" evidence="1">
    <location>
        <position position="103"/>
    </location>
</feature>
<feature type="active site" description="Cysteine persulfide intermediate" evidence="1">
    <location>
        <position position="207"/>
    </location>
</feature>
<feature type="binding site" evidence="1">
    <location>
        <begin position="12"/>
        <end position="19"/>
    </location>
    <ligand>
        <name>ATP</name>
        <dbReference type="ChEBI" id="CHEBI:30616"/>
    </ligand>
</feature>
<feature type="binding site" evidence="1">
    <location>
        <position position="38"/>
    </location>
    <ligand>
        <name>ATP</name>
        <dbReference type="ChEBI" id="CHEBI:30616"/>
    </ligand>
</feature>
<feature type="binding site" evidence="1">
    <location>
        <position position="128"/>
    </location>
    <ligand>
        <name>ATP</name>
        <dbReference type="ChEBI" id="CHEBI:30616"/>
    </ligand>
</feature>
<feature type="site" description="Interaction with tRNA" evidence="1">
    <location>
        <position position="129"/>
    </location>
</feature>
<feature type="site" description="Interaction with tRNA" evidence="1">
    <location>
        <position position="354"/>
    </location>
</feature>
<feature type="disulfide bond" description="Alternate" evidence="1">
    <location>
        <begin position="103"/>
        <end position="207"/>
    </location>
</feature>
<comment type="function">
    <text evidence="1">Catalyzes the 2-thiolation of uridine at the wobble position (U34) of tRNA, leading to the formation of s(2)U34.</text>
</comment>
<comment type="catalytic activity">
    <reaction evidence="1">
        <text>S-sulfanyl-L-cysteinyl-[protein] + uridine(34) in tRNA + AH2 + ATP = 2-thiouridine(34) in tRNA + L-cysteinyl-[protein] + A + AMP + diphosphate + H(+)</text>
        <dbReference type="Rhea" id="RHEA:47032"/>
        <dbReference type="Rhea" id="RHEA-COMP:10131"/>
        <dbReference type="Rhea" id="RHEA-COMP:11726"/>
        <dbReference type="Rhea" id="RHEA-COMP:11727"/>
        <dbReference type="Rhea" id="RHEA-COMP:11728"/>
        <dbReference type="ChEBI" id="CHEBI:13193"/>
        <dbReference type="ChEBI" id="CHEBI:15378"/>
        <dbReference type="ChEBI" id="CHEBI:17499"/>
        <dbReference type="ChEBI" id="CHEBI:29950"/>
        <dbReference type="ChEBI" id="CHEBI:30616"/>
        <dbReference type="ChEBI" id="CHEBI:33019"/>
        <dbReference type="ChEBI" id="CHEBI:61963"/>
        <dbReference type="ChEBI" id="CHEBI:65315"/>
        <dbReference type="ChEBI" id="CHEBI:87170"/>
        <dbReference type="ChEBI" id="CHEBI:456215"/>
        <dbReference type="EC" id="2.8.1.13"/>
    </reaction>
</comment>
<comment type="subcellular location">
    <subcellularLocation>
        <location evidence="1">Cytoplasm</location>
    </subcellularLocation>
</comment>
<comment type="similarity">
    <text evidence="1">Belongs to the MnmA/TRMU family.</text>
</comment>
<gene>
    <name evidence="1" type="primary">mnmA</name>
    <name type="synonym">trmU</name>
    <name type="ordered locus">VF_1784</name>
</gene>
<reference key="1">
    <citation type="journal article" date="2005" name="Proc. Natl. Acad. Sci. U.S.A.">
        <title>Complete genome sequence of Vibrio fischeri: a symbiotic bacterium with pathogenic congeners.</title>
        <authorList>
            <person name="Ruby E.G."/>
            <person name="Urbanowski M."/>
            <person name="Campbell J."/>
            <person name="Dunn A."/>
            <person name="Faini M."/>
            <person name="Gunsalus R."/>
            <person name="Lostroh P."/>
            <person name="Lupp C."/>
            <person name="McCann J."/>
            <person name="Millikan D."/>
            <person name="Schaefer A."/>
            <person name="Stabb E."/>
            <person name="Stevens A."/>
            <person name="Visick K."/>
            <person name="Whistler C."/>
            <person name="Greenberg E.P."/>
        </authorList>
    </citation>
    <scope>NUCLEOTIDE SEQUENCE [LARGE SCALE GENOMIC DNA]</scope>
    <source>
        <strain>ATCC 700601 / ES114</strain>
    </source>
</reference>